<reference key="1">
    <citation type="journal article" date="2002" name="J. Bacteriol.">
        <title>Identification of two prpDBC gene clusters in Corynebacterium glutamicum and their involvement in propionate degradation via the 2-methylcitrate cycle.</title>
        <authorList>
            <person name="Claes W.A."/>
            <person name="Puehler A."/>
            <person name="Kalinowski J."/>
        </authorList>
    </citation>
    <scope>NUCLEOTIDE SEQUENCE [GENOMIC DNA]</scope>
    <scope>FUNCTION</scope>
    <scope>INDUCTION</scope>
    <source>
        <strain>ATCC 13032 / DSM 20300 / JCM 1318 / BCRC 11384 / CCUG 27702 / LMG 3730 / NBRC 12168 / NCIMB 10025 / NRRL B-2784 / 534</strain>
    </source>
</reference>
<reference key="2">
    <citation type="journal article" date="2003" name="Appl. Microbiol. Biotechnol.">
        <title>The Corynebacterium glutamicum genome: features and impacts on biotechnological processes.</title>
        <authorList>
            <person name="Ikeda M."/>
            <person name="Nakagawa S."/>
        </authorList>
    </citation>
    <scope>NUCLEOTIDE SEQUENCE [LARGE SCALE GENOMIC DNA]</scope>
    <source>
        <strain>ATCC 13032 / DSM 20300 / JCM 1318 / BCRC 11384 / CCUG 27702 / LMG 3730 / NBRC 12168 / NCIMB 10025 / NRRL B-2784 / 534</strain>
    </source>
</reference>
<reference key="3">
    <citation type="journal article" date="2003" name="J. Biotechnol.">
        <title>The complete Corynebacterium glutamicum ATCC 13032 genome sequence and its impact on the production of L-aspartate-derived amino acids and vitamins.</title>
        <authorList>
            <person name="Kalinowski J."/>
            <person name="Bathe B."/>
            <person name="Bartels D."/>
            <person name="Bischoff N."/>
            <person name="Bott M."/>
            <person name="Burkovski A."/>
            <person name="Dusch N."/>
            <person name="Eggeling L."/>
            <person name="Eikmanns B.J."/>
            <person name="Gaigalat L."/>
            <person name="Goesmann A."/>
            <person name="Hartmann M."/>
            <person name="Huthmacher K."/>
            <person name="Kraemer R."/>
            <person name="Linke B."/>
            <person name="McHardy A.C."/>
            <person name="Meyer F."/>
            <person name="Moeckel B."/>
            <person name="Pfefferle W."/>
            <person name="Puehler A."/>
            <person name="Rey D.A."/>
            <person name="Rueckert C."/>
            <person name="Rupp O."/>
            <person name="Sahm H."/>
            <person name="Wendisch V.F."/>
            <person name="Wiegraebe I."/>
            <person name="Tauch A."/>
        </authorList>
    </citation>
    <scope>NUCLEOTIDE SEQUENCE [LARGE SCALE GENOMIC DNA]</scope>
    <source>
        <strain>ATCC 13032 / DSM 20300 / JCM 1318 / BCRC 11384 / CCUG 27702 / LMG 3730 / NBRC 12168 / NCIMB 10025 / NRRL B-2784 / 534</strain>
    </source>
</reference>
<dbReference type="EC" id="4.2.1.79" evidence="1"/>
<dbReference type="EC" id="4.2.1.3" evidence="1"/>
<dbReference type="EMBL" id="AF434799">
    <property type="protein sequence ID" value="AAM21504.1"/>
    <property type="molecule type" value="Genomic_DNA"/>
</dbReference>
<dbReference type="EMBL" id="BA000036">
    <property type="protein sequence ID" value="BAB98050.1"/>
    <property type="status" value="ALT_FRAME"/>
    <property type="molecule type" value="Genomic_DNA"/>
</dbReference>
<dbReference type="EMBL" id="BX927149">
    <property type="protein sequence ID" value="CAF19363.1"/>
    <property type="molecule type" value="Genomic_DNA"/>
</dbReference>
<dbReference type="SMR" id="Q8NSL3"/>
<dbReference type="STRING" id="196627.cg0759"/>
<dbReference type="KEGG" id="cgb:cg0759"/>
<dbReference type="KEGG" id="cgl:Cgl0657"/>
<dbReference type="eggNOG" id="COG2079">
    <property type="taxonomic scope" value="Bacteria"/>
</dbReference>
<dbReference type="HOGENOM" id="CLU_087220_0_0_11"/>
<dbReference type="BioCyc" id="CORYNE:G18NG-10219-MONOMER"/>
<dbReference type="UniPathway" id="UPA00223">
    <property type="reaction ID" value="UER00717"/>
</dbReference>
<dbReference type="UniPathway" id="UPA00946"/>
<dbReference type="Proteomes" id="UP000000582">
    <property type="component" value="Chromosome"/>
</dbReference>
<dbReference type="Proteomes" id="UP000001009">
    <property type="component" value="Chromosome"/>
</dbReference>
<dbReference type="GO" id="GO:0047547">
    <property type="term" value="F:2-methylcitrate dehydratase activity"/>
    <property type="evidence" value="ECO:0000314"/>
    <property type="project" value="UniProtKB"/>
</dbReference>
<dbReference type="GO" id="GO:0003994">
    <property type="term" value="F:aconitate hydratase activity"/>
    <property type="evidence" value="ECO:0007669"/>
    <property type="project" value="UniProtKB-EC"/>
</dbReference>
<dbReference type="GO" id="GO:0019679">
    <property type="term" value="P:propionate metabolic process, methylcitrate cycle"/>
    <property type="evidence" value="ECO:0000314"/>
    <property type="project" value="UniProtKB"/>
</dbReference>
<dbReference type="GO" id="GO:0006099">
    <property type="term" value="P:tricarboxylic acid cycle"/>
    <property type="evidence" value="ECO:0007669"/>
    <property type="project" value="UniProtKB-UniPathway"/>
</dbReference>
<dbReference type="FunFam" id="1.10.4100.10:FF:000003">
    <property type="entry name" value="2-methylcitrate dehydratase 1"/>
    <property type="match status" value="1"/>
</dbReference>
<dbReference type="FunFam" id="3.30.1330.120:FF:000004">
    <property type="entry name" value="2-methylcitrate dehydratase 2"/>
    <property type="match status" value="1"/>
</dbReference>
<dbReference type="Gene3D" id="1.10.4100.10">
    <property type="entry name" value="2-methylcitrate dehydratase PrpD"/>
    <property type="match status" value="1"/>
</dbReference>
<dbReference type="Gene3D" id="3.30.1330.120">
    <property type="entry name" value="2-methylcitrate dehydratase PrpD"/>
    <property type="match status" value="1"/>
</dbReference>
<dbReference type="InterPro" id="IPR053420">
    <property type="entry name" value="2-Methylcitrate_Dehydratase"/>
</dbReference>
<dbReference type="InterPro" id="IPR036148">
    <property type="entry name" value="MmgE/PrpD_sf"/>
</dbReference>
<dbReference type="InterPro" id="IPR042183">
    <property type="entry name" value="MmgE/PrpD_sf_1"/>
</dbReference>
<dbReference type="InterPro" id="IPR042188">
    <property type="entry name" value="MmgE/PrpD_sf_2"/>
</dbReference>
<dbReference type="InterPro" id="IPR005656">
    <property type="entry name" value="MmgE_PrpD"/>
</dbReference>
<dbReference type="InterPro" id="IPR045337">
    <property type="entry name" value="MmgE_PrpD_C"/>
</dbReference>
<dbReference type="InterPro" id="IPR045336">
    <property type="entry name" value="MmgE_PrpD_N"/>
</dbReference>
<dbReference type="NCBIfam" id="NF042438">
    <property type="entry name" value="PrpD_hiGCgrampos"/>
    <property type="match status" value="1"/>
</dbReference>
<dbReference type="PANTHER" id="PTHR16943:SF8">
    <property type="entry name" value="2-METHYLCITRATE DEHYDRATASE"/>
    <property type="match status" value="1"/>
</dbReference>
<dbReference type="PANTHER" id="PTHR16943">
    <property type="entry name" value="2-METHYLCITRATE DEHYDRATASE-RELATED"/>
    <property type="match status" value="1"/>
</dbReference>
<dbReference type="Pfam" id="PF19305">
    <property type="entry name" value="MmgE_PrpD_C"/>
    <property type="match status" value="1"/>
</dbReference>
<dbReference type="Pfam" id="PF03972">
    <property type="entry name" value="MmgE_PrpD_N"/>
    <property type="match status" value="1"/>
</dbReference>
<dbReference type="SUPFAM" id="SSF103378">
    <property type="entry name" value="2-methylcitrate dehydratase PrpD"/>
    <property type="match status" value="1"/>
</dbReference>
<evidence type="ECO:0000250" key="1">
    <source>
        <dbReference type="UniProtKB" id="P77243"/>
    </source>
</evidence>
<evidence type="ECO:0000269" key="2">
    <source>
    </source>
</evidence>
<evidence type="ECO:0000303" key="3">
    <source>
    </source>
</evidence>
<evidence type="ECO:0000305" key="4"/>
<evidence type="ECO:0000305" key="5">
    <source>
    </source>
</evidence>
<keyword id="KW-0456">Lyase</keyword>
<keyword id="KW-1185">Reference proteome</keyword>
<keyword id="KW-0816">Tricarboxylic acid cycle</keyword>
<proteinExistence type="evidence at transcript level"/>
<comment type="function">
    <text evidence="1 2">Involved in the catabolism of short chain fatty acids (SCFA) via the 2-methylcitrate cycle I (propionate degradation route). Catalyzes the dehydration of 2-methylcitrate (2-MC) to yield the cis isomer 2-methyl-aconitate (PubMed:11976302). Could also catalyze the dehydration of citrate and the hydration of cis-aconitate (By similarity).</text>
</comment>
<comment type="catalytic activity">
    <reaction evidence="1">
        <text>(2S,3S)-2-methylcitrate = 2-methyl-cis-aconitate + H2O</text>
        <dbReference type="Rhea" id="RHEA:17725"/>
        <dbReference type="ChEBI" id="CHEBI:15377"/>
        <dbReference type="ChEBI" id="CHEBI:57872"/>
        <dbReference type="ChEBI" id="CHEBI:58853"/>
        <dbReference type="EC" id="4.2.1.79"/>
    </reaction>
</comment>
<comment type="catalytic activity">
    <reaction evidence="1">
        <text>citrate = D-threo-isocitrate</text>
        <dbReference type="Rhea" id="RHEA:10336"/>
        <dbReference type="ChEBI" id="CHEBI:15562"/>
        <dbReference type="ChEBI" id="CHEBI:16947"/>
        <dbReference type="EC" id="4.2.1.3"/>
    </reaction>
</comment>
<comment type="pathway">
    <text evidence="5">Organic acid metabolism; propanoate degradation.</text>
</comment>
<comment type="pathway">
    <text evidence="4">Carbohydrate metabolism; tricarboxylic acid cycle; isocitrate from oxaloacetate: step 1/2.</text>
</comment>
<comment type="subunit">
    <text evidence="1">Monomer.</text>
</comment>
<comment type="induction">
    <text evidence="2">By propionate.</text>
</comment>
<comment type="miscellaneous">
    <text evidence="2">The prpD2B2C2 operon is essential for growth on propionate as sole carbon source.</text>
</comment>
<comment type="similarity">
    <text evidence="4">Belongs to the PrpD family.</text>
</comment>
<comment type="sequence caution" evidence="4">
    <conflict type="frameshift">
        <sequence resource="EMBL-CDS" id="BAB98050"/>
    </conflict>
</comment>
<sequence>MINHEVRTHRSAEEFPYEEHLAHKIARVAADPVEVAADTQEMIINRIIDNASVQAASVLRRPVSSARAMAQVRPVTDGRGASVFGLPGRYAAEWAALANGTAVRELDFHDTFLAAEYSHPGDNIPPILAAAQQAGKGGKDLIRGIATGYEIQVNLVRGMCLHEHKIDHVAHLGPSAAAGIGTLLDLDVDTIYQAIGQALHTTTATRQSRKGAISSWKAFAPAFAGKMSIEAVDRAMRGEGAPSPIWEGEDGVIAWLLSGLDHIYTIPLPAEGEAKRAILDTYTKEHSAEYQSQAPIDLARSMGEKLAAQGLDLRDVDSIVLHTSHHTHYVIGTGSNDPQKFDPDASRETLDHSIMYIFAVALEDRAWHHERSYAPERAHRRETIELWNKISTVEDPEWTRRYHSVDPAEKAFGARAVITFKDGTVVEDELAVADAHPLGARPFAREQYIQKFRTLAEGVVSEKEQDRFLDAAQRTHELEDLSELNIELDADILAKAPVIPEGLF</sequence>
<organism>
    <name type="scientific">Corynebacterium glutamicum (strain ATCC 13032 / DSM 20300 / JCM 1318 / BCRC 11384 / CCUG 27702 / LMG 3730 / NBRC 12168 / NCIMB 10025 / NRRL B-2784 / 534)</name>
    <dbReference type="NCBI Taxonomy" id="196627"/>
    <lineage>
        <taxon>Bacteria</taxon>
        <taxon>Bacillati</taxon>
        <taxon>Actinomycetota</taxon>
        <taxon>Actinomycetes</taxon>
        <taxon>Mycobacteriales</taxon>
        <taxon>Corynebacteriaceae</taxon>
        <taxon>Corynebacterium</taxon>
    </lineage>
</organism>
<accession>Q8NSL3</accession>
<gene>
    <name type="primary">prpD2</name>
    <name type="ordered locus">Cgl0657</name>
    <name type="ordered locus">cg0759</name>
</gene>
<protein>
    <recommendedName>
        <fullName evidence="3">2-methylcitrate dehydratase 2</fullName>
        <shortName evidence="3">2-MC dehydratase</shortName>
        <ecNumber evidence="1">4.2.1.79</ecNumber>
    </recommendedName>
    <alternativeName>
        <fullName evidence="1">Aconitate hydratase</fullName>
        <shortName evidence="1">ACN</shortName>
        <shortName evidence="1">Aconitase</shortName>
        <ecNumber evidence="1">4.2.1.3</ecNumber>
    </alternativeName>
</protein>
<feature type="chain" id="PRO_0000215022" description="2-methylcitrate dehydratase 2">
    <location>
        <begin position="1"/>
        <end position="504"/>
    </location>
</feature>
<name>PRPD2_CORGL</name>